<reference key="1">
    <citation type="journal article" date="2009" name="BMC Genomics">
        <title>Metabolic analysis of the soil microbe Dechloromonas aromatica str. RCB: indications of a surprisingly complex life-style and cryptic anaerobic pathways for aromatic degradation.</title>
        <authorList>
            <person name="Salinero K.K."/>
            <person name="Keller K."/>
            <person name="Feil W.S."/>
            <person name="Feil H."/>
            <person name="Trong S."/>
            <person name="Di Bartolo G."/>
            <person name="Lapidus A."/>
        </authorList>
    </citation>
    <scope>NUCLEOTIDE SEQUENCE [LARGE SCALE GENOMIC DNA]</scope>
    <source>
        <strain>RCB</strain>
    </source>
</reference>
<organism>
    <name type="scientific">Dechloromonas aromatica (strain RCB)</name>
    <dbReference type="NCBI Taxonomy" id="159087"/>
    <lineage>
        <taxon>Bacteria</taxon>
        <taxon>Pseudomonadati</taxon>
        <taxon>Pseudomonadota</taxon>
        <taxon>Betaproteobacteria</taxon>
        <taxon>Rhodocyclales</taxon>
        <taxon>Azonexaceae</taxon>
        <taxon>Dechloromonas</taxon>
    </lineage>
</organism>
<comment type="function">
    <text evidence="1">The UvrABC repair system catalyzes the recognition and processing of DNA lesions. UvrC both incises the 5' and 3' sides of the lesion. The N-terminal half is responsible for the 3' incision and the C-terminal half is responsible for the 5' incision.</text>
</comment>
<comment type="subunit">
    <text evidence="1">Interacts with UvrB in an incision complex.</text>
</comment>
<comment type="subcellular location">
    <subcellularLocation>
        <location evidence="1">Cytoplasm</location>
    </subcellularLocation>
</comment>
<comment type="similarity">
    <text evidence="1">Belongs to the UvrC family.</text>
</comment>
<evidence type="ECO:0000255" key="1">
    <source>
        <dbReference type="HAMAP-Rule" id="MF_00203"/>
    </source>
</evidence>
<protein>
    <recommendedName>
        <fullName evidence="1">UvrABC system protein C</fullName>
        <shortName evidence="1">Protein UvrC</shortName>
    </recommendedName>
    <alternativeName>
        <fullName evidence="1">Excinuclease ABC subunit C</fullName>
    </alternativeName>
</protein>
<feature type="chain" id="PRO_0000227422" description="UvrABC system protein C">
    <location>
        <begin position="1"/>
        <end position="603"/>
    </location>
</feature>
<feature type="domain" description="GIY-YIG" evidence="1">
    <location>
        <begin position="14"/>
        <end position="92"/>
    </location>
</feature>
<feature type="domain" description="UVR" evidence="1">
    <location>
        <begin position="201"/>
        <end position="236"/>
    </location>
</feature>
<keyword id="KW-0963">Cytoplasm</keyword>
<keyword id="KW-0227">DNA damage</keyword>
<keyword id="KW-0228">DNA excision</keyword>
<keyword id="KW-0234">DNA repair</keyword>
<keyword id="KW-0267">Excision nuclease</keyword>
<keyword id="KW-0742">SOS response</keyword>
<gene>
    <name evidence="1" type="primary">uvrC</name>
    <name type="ordered locus">Daro_2038</name>
</gene>
<name>UVRC_DECAR</name>
<sequence length="603" mass="66360">MSFDAKAFLATLTELPGVYRMLDIGGNVLYVGKAKNLKKRVASYFRENLSSPRIAHMVSQIASIETTATRTEAEALLLENNLIKSLAPRYNILFRDDKSYPYIVLSKGKFPRLGFFRGNPDRKADYFGPYPSSWAVRDSIHLMQKMFRLRTCEDTVFSNRSRPCLLYQIKRCSGPCVGFISADDYAADIQLAAMFLLGKQQEVTRRLTKSMEEASAKLAFEQAAVFRDQIQSLHQVQEKQFVSSSKGEDVDVLVAIKEAGQLCVNLAMVRGGRHLGDRPFFPTNAADSEPSDACAAFIRQHYAAHPAPARILSYPLPSEDEAGETEVALAELAGRPVPVQEGRGATHKAWVEMAIQNARLAILAKNQATAQQEQRLAALQDALQLPEPIARIECFDISHTMGEATVASCVVYEGNRMKKSDYRRFNIRDIQAGDDYAAMRQAVSRRYDSIAGGEGTAPDLILIDGGKGQVSSAFSALADLGLTHLPMIGVAKGEERKPGLETLIFPEGREPLQLPPQHPALHLIQEIRDEAHRFAITGHRAQRGKARKTSKLESLPGIGPARRKALVARFGGLPGVLAASIDQLAEVPGVSREMAEKIHSALH</sequence>
<dbReference type="EMBL" id="CP000089">
    <property type="protein sequence ID" value="AAZ46783.1"/>
    <property type="molecule type" value="Genomic_DNA"/>
</dbReference>
<dbReference type="SMR" id="Q47EE8"/>
<dbReference type="STRING" id="159087.Daro_2038"/>
<dbReference type="KEGG" id="dar:Daro_2038"/>
<dbReference type="eggNOG" id="COG0322">
    <property type="taxonomic scope" value="Bacteria"/>
</dbReference>
<dbReference type="HOGENOM" id="CLU_014841_3_0_4"/>
<dbReference type="OrthoDB" id="9804933at2"/>
<dbReference type="GO" id="GO:0005737">
    <property type="term" value="C:cytoplasm"/>
    <property type="evidence" value="ECO:0007669"/>
    <property type="project" value="UniProtKB-SubCell"/>
</dbReference>
<dbReference type="GO" id="GO:0009380">
    <property type="term" value="C:excinuclease repair complex"/>
    <property type="evidence" value="ECO:0007669"/>
    <property type="project" value="InterPro"/>
</dbReference>
<dbReference type="GO" id="GO:0003677">
    <property type="term" value="F:DNA binding"/>
    <property type="evidence" value="ECO:0007669"/>
    <property type="project" value="UniProtKB-UniRule"/>
</dbReference>
<dbReference type="GO" id="GO:0009381">
    <property type="term" value="F:excinuclease ABC activity"/>
    <property type="evidence" value="ECO:0007669"/>
    <property type="project" value="UniProtKB-UniRule"/>
</dbReference>
<dbReference type="GO" id="GO:0006289">
    <property type="term" value="P:nucleotide-excision repair"/>
    <property type="evidence" value="ECO:0007669"/>
    <property type="project" value="UniProtKB-UniRule"/>
</dbReference>
<dbReference type="GO" id="GO:0009432">
    <property type="term" value="P:SOS response"/>
    <property type="evidence" value="ECO:0007669"/>
    <property type="project" value="UniProtKB-UniRule"/>
</dbReference>
<dbReference type="CDD" id="cd10434">
    <property type="entry name" value="GIY-YIG_UvrC_Cho"/>
    <property type="match status" value="1"/>
</dbReference>
<dbReference type="FunFam" id="3.30.420.340:FF:000001">
    <property type="entry name" value="UvrABC system protein C"/>
    <property type="match status" value="1"/>
</dbReference>
<dbReference type="FunFam" id="3.40.1440.10:FF:000001">
    <property type="entry name" value="UvrABC system protein C"/>
    <property type="match status" value="1"/>
</dbReference>
<dbReference type="Gene3D" id="1.10.150.20">
    <property type="entry name" value="5' to 3' exonuclease, C-terminal subdomain"/>
    <property type="match status" value="1"/>
</dbReference>
<dbReference type="Gene3D" id="3.40.1440.10">
    <property type="entry name" value="GIY-YIG endonuclease"/>
    <property type="match status" value="1"/>
</dbReference>
<dbReference type="Gene3D" id="4.10.860.10">
    <property type="entry name" value="UVR domain"/>
    <property type="match status" value="1"/>
</dbReference>
<dbReference type="Gene3D" id="3.30.420.340">
    <property type="entry name" value="UvrC, RNAse H endonuclease domain"/>
    <property type="match status" value="1"/>
</dbReference>
<dbReference type="HAMAP" id="MF_00203">
    <property type="entry name" value="UvrC"/>
    <property type="match status" value="1"/>
</dbReference>
<dbReference type="InterPro" id="IPR000305">
    <property type="entry name" value="GIY-YIG_endonuc"/>
</dbReference>
<dbReference type="InterPro" id="IPR035901">
    <property type="entry name" value="GIY-YIG_endonuc_sf"/>
</dbReference>
<dbReference type="InterPro" id="IPR047296">
    <property type="entry name" value="GIY-YIG_UvrC_Cho"/>
</dbReference>
<dbReference type="InterPro" id="IPR003583">
    <property type="entry name" value="Hlx-hairpin-Hlx_DNA-bd_motif"/>
</dbReference>
<dbReference type="InterPro" id="IPR010994">
    <property type="entry name" value="RuvA_2-like"/>
</dbReference>
<dbReference type="InterPro" id="IPR001943">
    <property type="entry name" value="UVR_dom"/>
</dbReference>
<dbReference type="InterPro" id="IPR036876">
    <property type="entry name" value="UVR_dom_sf"/>
</dbReference>
<dbReference type="InterPro" id="IPR050066">
    <property type="entry name" value="UvrABC_protein_C"/>
</dbReference>
<dbReference type="InterPro" id="IPR004791">
    <property type="entry name" value="UvrC"/>
</dbReference>
<dbReference type="InterPro" id="IPR001162">
    <property type="entry name" value="UvrC_RNase_H_dom"/>
</dbReference>
<dbReference type="InterPro" id="IPR038476">
    <property type="entry name" value="UvrC_RNase_H_dom_sf"/>
</dbReference>
<dbReference type="NCBIfam" id="NF001824">
    <property type="entry name" value="PRK00558.1-5"/>
    <property type="match status" value="1"/>
</dbReference>
<dbReference type="NCBIfam" id="TIGR00194">
    <property type="entry name" value="uvrC"/>
    <property type="match status" value="1"/>
</dbReference>
<dbReference type="PANTHER" id="PTHR30562:SF1">
    <property type="entry name" value="UVRABC SYSTEM PROTEIN C"/>
    <property type="match status" value="1"/>
</dbReference>
<dbReference type="PANTHER" id="PTHR30562">
    <property type="entry name" value="UVRC/OXIDOREDUCTASE"/>
    <property type="match status" value="1"/>
</dbReference>
<dbReference type="Pfam" id="PF01541">
    <property type="entry name" value="GIY-YIG"/>
    <property type="match status" value="1"/>
</dbReference>
<dbReference type="Pfam" id="PF14520">
    <property type="entry name" value="HHH_5"/>
    <property type="match status" value="1"/>
</dbReference>
<dbReference type="Pfam" id="PF02151">
    <property type="entry name" value="UVR"/>
    <property type="match status" value="1"/>
</dbReference>
<dbReference type="Pfam" id="PF22920">
    <property type="entry name" value="UvrC_RNaseH"/>
    <property type="match status" value="1"/>
</dbReference>
<dbReference type="Pfam" id="PF08459">
    <property type="entry name" value="UvrC_RNaseH_dom"/>
    <property type="match status" value="1"/>
</dbReference>
<dbReference type="SMART" id="SM00465">
    <property type="entry name" value="GIYc"/>
    <property type="match status" value="1"/>
</dbReference>
<dbReference type="SMART" id="SM00278">
    <property type="entry name" value="HhH1"/>
    <property type="match status" value="2"/>
</dbReference>
<dbReference type="SUPFAM" id="SSF46600">
    <property type="entry name" value="C-terminal UvrC-binding domain of UvrB"/>
    <property type="match status" value="1"/>
</dbReference>
<dbReference type="SUPFAM" id="SSF82771">
    <property type="entry name" value="GIY-YIG endonuclease"/>
    <property type="match status" value="1"/>
</dbReference>
<dbReference type="SUPFAM" id="SSF47781">
    <property type="entry name" value="RuvA domain 2-like"/>
    <property type="match status" value="1"/>
</dbReference>
<dbReference type="PROSITE" id="PS50164">
    <property type="entry name" value="GIY_YIG"/>
    <property type="match status" value="1"/>
</dbReference>
<dbReference type="PROSITE" id="PS50151">
    <property type="entry name" value="UVR"/>
    <property type="match status" value="1"/>
</dbReference>
<dbReference type="PROSITE" id="PS50165">
    <property type="entry name" value="UVRC"/>
    <property type="match status" value="1"/>
</dbReference>
<proteinExistence type="inferred from homology"/>
<accession>Q47EE8</accession>